<comment type="function">
    <text evidence="2">Alpha-ketoglutarate-dependent dioxygenase that in vitro catalyzes the regio- and stereoselective hydroxylation of L-lysine, leading to (4R)-4-hydroxy-L-lysine. To a lesser extent, can also use (3S)-3-hydroxy-L-lysine as substrate, producing the dihydroxylated product (3R,4R)-3,4-hydroxy-L-lysine. Cannot use D-lysine or L-ornithine as substrate.</text>
</comment>
<comment type="catalytic activity">
    <reaction evidence="2">
        <text>L-lysine + 2-oxoglutarate + O2 = (4R)-4-hydroxy-L-lysine + succinate + CO2</text>
        <dbReference type="Rhea" id="RHEA:42420"/>
        <dbReference type="ChEBI" id="CHEBI:15379"/>
        <dbReference type="ChEBI" id="CHEBI:16526"/>
        <dbReference type="ChEBI" id="CHEBI:16810"/>
        <dbReference type="ChEBI" id="CHEBI:30031"/>
        <dbReference type="ChEBI" id="CHEBI:32551"/>
        <dbReference type="ChEBI" id="CHEBI:77410"/>
    </reaction>
</comment>
<comment type="cofactor">
    <cofactor evidence="1">
        <name>Fe(2+)</name>
        <dbReference type="ChEBI" id="CHEBI:29033"/>
    </cofactor>
    <text evidence="1">Binds 1 Fe(2+) ion per subunit.</text>
</comment>
<comment type="biotechnology">
    <text evidence="5">Being totally regio- and stereoselective, this enzyme is of interest for biocatalytic purposes to produce chiral scaffolds that are of synthetic value in the preparation of more complex functionalized chiral molecules such as natural products and analogs.</text>
</comment>
<comment type="similarity">
    <text evidence="4">Belongs to the clavaminate synthase family.</text>
</comment>
<feature type="chain" id="PRO_0000435694" description="L-lysine 4-hydroxylase">
    <location>
        <begin position="1"/>
        <end position="370"/>
    </location>
</feature>
<feature type="binding site" evidence="1">
    <location>
        <position position="176"/>
    </location>
    <ligand>
        <name>Fe cation</name>
        <dbReference type="ChEBI" id="CHEBI:24875"/>
    </ligand>
</feature>
<feature type="binding site" evidence="1">
    <location>
        <position position="178"/>
    </location>
    <ligand>
        <name>Fe cation</name>
        <dbReference type="ChEBI" id="CHEBI:24875"/>
    </ligand>
</feature>
<feature type="binding site" evidence="1">
    <location>
        <position position="310"/>
    </location>
    <ligand>
        <name>Fe cation</name>
        <dbReference type="ChEBI" id="CHEBI:24875"/>
    </ligand>
</feature>
<protein>
    <recommendedName>
        <fullName evidence="5">L-lysine 4-hydroxylase</fullName>
        <ecNumber evidence="2">1.14.11.-</ecNumber>
    </recommendedName>
    <alternativeName>
        <fullName evidence="3">Alpha-ketoglutarate-dependent dioxygenase</fullName>
    </alternativeName>
    <alternativeName>
        <fullName evidence="3">KDO3</fullName>
    </alternativeName>
    <alternativeName>
        <fullName evidence="3">L-lysine hydroxylase</fullName>
    </alternativeName>
</protein>
<gene>
    <name evidence="6" type="ordered locus">Fjoh_3169</name>
</gene>
<name>LYS4O_FLAJ1</name>
<dbReference type="EC" id="1.14.11.-" evidence="2"/>
<dbReference type="EMBL" id="CP000685">
    <property type="protein sequence ID" value="ABQ06186.1"/>
    <property type="molecule type" value="Genomic_DNA"/>
</dbReference>
<dbReference type="RefSeq" id="WP_012025155.1">
    <property type="nucleotide sequence ID" value="NC_009441.1"/>
</dbReference>
<dbReference type="SMR" id="A5FF23"/>
<dbReference type="STRING" id="376686.Fjoh_3169"/>
<dbReference type="KEGG" id="fjo:Fjoh_3169"/>
<dbReference type="eggNOG" id="COG2175">
    <property type="taxonomic scope" value="Bacteria"/>
</dbReference>
<dbReference type="HOGENOM" id="CLU_722989_0_0_10"/>
<dbReference type="OrthoDB" id="1265925at2"/>
<dbReference type="Proteomes" id="UP000006694">
    <property type="component" value="Chromosome"/>
</dbReference>
<dbReference type="GO" id="GO:0016706">
    <property type="term" value="F:2-oxoglutarate-dependent dioxygenase activity"/>
    <property type="evidence" value="ECO:0000314"/>
    <property type="project" value="UniProtKB"/>
</dbReference>
<dbReference type="GO" id="GO:0046872">
    <property type="term" value="F:metal ion binding"/>
    <property type="evidence" value="ECO:0007669"/>
    <property type="project" value="UniProtKB-KW"/>
</dbReference>
<dbReference type="FunFam" id="3.60.130.10:FF:000027">
    <property type="entry name" value="L-lysine 4-hydroxylase"/>
    <property type="match status" value="1"/>
</dbReference>
<dbReference type="Gene3D" id="3.60.130.10">
    <property type="entry name" value="Clavaminate synthase-like"/>
    <property type="match status" value="1"/>
</dbReference>
<dbReference type="InterPro" id="IPR042098">
    <property type="entry name" value="TauD-like_sf"/>
</dbReference>
<dbReference type="SUPFAM" id="SSF51197">
    <property type="entry name" value="Clavaminate synthase-like"/>
    <property type="match status" value="1"/>
</dbReference>
<reference key="1">
    <citation type="journal article" date="2009" name="Appl. Environ. Microbiol.">
        <title>Novel features of the polysaccharide-digesting gliding bacterium Flavobacterium johnsoniae as revealed by genome sequence analysis.</title>
        <authorList>
            <person name="McBride M.J."/>
            <person name="Xie G."/>
            <person name="Martens E.C."/>
            <person name="Lapidus A."/>
            <person name="Henrissat B."/>
            <person name="Rhodes R.G."/>
            <person name="Goltsman E."/>
            <person name="Wang W."/>
            <person name="Xu J."/>
            <person name="Hunnicutt D.W."/>
            <person name="Staroscik A.M."/>
            <person name="Hoover T.R."/>
            <person name="Cheng Y.Q."/>
            <person name="Stein J.L."/>
        </authorList>
    </citation>
    <scope>NUCLEOTIDE SEQUENCE [LARGE SCALE GENOMIC DNA]</scope>
    <source>
        <strain>ATCC 17061 / DSM 2064 / JCM 8514 / BCRC 14874 / CCUG 350202 / NBRC 14942 / NCIMB 11054 / UW101</strain>
    </source>
</reference>
<reference key="2">
    <citation type="journal article" date="2014" name="ChemCatChem">
        <title>Synthesis of mono- and dihydroxylated amino acids with new alpha-ketoglutarate-dependent dioxygenases: biocatalytic oxidation of C-H bonds.</title>
        <authorList>
            <person name="Baud D."/>
            <person name="Saaidi P.-L."/>
            <person name="Monfleur A."/>
            <person name="Harari M."/>
            <person name="Cuccaro J."/>
            <person name="Fossey A."/>
            <person name="Besnard M."/>
            <person name="Debard A."/>
            <person name="Mariage A."/>
            <person name="Pellouin V."/>
            <person name="Petit J.-L."/>
            <person name="Salanoubat M."/>
            <person name="Weissenbach J."/>
            <person name="de Berardinis V."/>
            <person name="Zaparucha A."/>
        </authorList>
    </citation>
    <scope>FUNCTION</scope>
    <scope>CATALYTIC ACTIVITY</scope>
    <scope>SUBSTRATE SPECIFICITY</scope>
    <scope>BIOTECHNOLOGY</scope>
</reference>
<proteinExistence type="evidence at protein level"/>
<accession>A5FF23</accession>
<evidence type="ECO:0000250" key="1">
    <source>
        <dbReference type="UniProtKB" id="Q9Z4Z5"/>
    </source>
</evidence>
<evidence type="ECO:0000269" key="2">
    <source ref="2"/>
</evidence>
<evidence type="ECO:0000303" key="3">
    <source ref="2"/>
</evidence>
<evidence type="ECO:0000305" key="4"/>
<evidence type="ECO:0000305" key="5">
    <source ref="2"/>
</evidence>
<evidence type="ECO:0000312" key="6">
    <source>
        <dbReference type="EMBL" id="ABQ06186.1"/>
    </source>
</evidence>
<organism>
    <name type="scientific">Flavobacterium johnsoniae (strain ATCC 17061 / DSM 2064 / JCM 8514 / BCRC 14874 / CCUG 350202 / NBRC 14942 / NCIMB 11054 / UW101)</name>
    <name type="common">Cytophaga johnsonae</name>
    <dbReference type="NCBI Taxonomy" id="376686"/>
    <lineage>
        <taxon>Bacteria</taxon>
        <taxon>Pseudomonadati</taxon>
        <taxon>Bacteroidota</taxon>
        <taxon>Flavobacteriia</taxon>
        <taxon>Flavobacteriales</taxon>
        <taxon>Flavobacteriaceae</taxon>
        <taxon>Flavobacterium</taxon>
    </lineage>
</organism>
<sequence>MKSQSLIEDEIPVKENYAYQIPTSPLIVEVTPQERNILSNVGALLEKAFKSYENPDYIEALHLYSFQLLPERIARILSRFGTDFSADQYGAIIFRGLLEVDQDHLGPTPANWQSADYSKLNKYGFICSLLHGAVPSKPVQYYAQRKGGGILHAVIPDEKMAATQTGSGSKTNLYVHTEDAFLLHQADFLSFLYLRNEERVPSTLYSVRSHGKVNKIMEKLFDPIYQCPKDANYQEEINDGPLASVLYGNKKLPFIRFDAAEQIFNENAGQTPEALYNLTEFWNEAKELINSDYIPDSGDVIFVNNHLCAHGRSAFTAGQKEENGKLVPCERRQMLRMMSKTSLIHIRSMTHTDDPYFVMEEHLGKVFDQA</sequence>
<keyword id="KW-0223">Dioxygenase</keyword>
<keyword id="KW-0408">Iron</keyword>
<keyword id="KW-0479">Metal-binding</keyword>
<keyword id="KW-0560">Oxidoreductase</keyword>